<protein>
    <recommendedName>
        <fullName evidence="1">Pyrimidine-specific ribonucleoside hydrolase RihA</fullName>
        <ecNumber evidence="1">3.2.-.-</ecNumber>
    </recommendedName>
    <alternativeName>
        <fullName evidence="1">Cytidine/uridine-specific hydrolase</fullName>
    </alternativeName>
</protein>
<dbReference type="EC" id="3.2.-.-" evidence="1"/>
<dbReference type="EMBL" id="CU928161">
    <property type="protein sequence ID" value="CAR02026.1"/>
    <property type="molecule type" value="Genomic_DNA"/>
</dbReference>
<dbReference type="RefSeq" id="WP_001207539.1">
    <property type="nucleotide sequence ID" value="NC_011742.1"/>
</dbReference>
<dbReference type="SMR" id="B7MFR7"/>
<dbReference type="KEGG" id="ecz:ECS88_0686"/>
<dbReference type="HOGENOM" id="CLU_036838_2_0_6"/>
<dbReference type="Proteomes" id="UP000000747">
    <property type="component" value="Chromosome"/>
</dbReference>
<dbReference type="GO" id="GO:0005829">
    <property type="term" value="C:cytosol"/>
    <property type="evidence" value="ECO:0007669"/>
    <property type="project" value="TreeGrafter"/>
</dbReference>
<dbReference type="GO" id="GO:0008477">
    <property type="term" value="F:purine nucleosidase activity"/>
    <property type="evidence" value="ECO:0007669"/>
    <property type="project" value="TreeGrafter"/>
</dbReference>
<dbReference type="GO" id="GO:0045437">
    <property type="term" value="F:uridine nucleosidase activity"/>
    <property type="evidence" value="ECO:0007669"/>
    <property type="project" value="InterPro"/>
</dbReference>
<dbReference type="GO" id="GO:0015949">
    <property type="term" value="P:nucleobase-containing small molecule interconversion"/>
    <property type="evidence" value="ECO:0007669"/>
    <property type="project" value="InterPro"/>
</dbReference>
<dbReference type="GO" id="GO:0006152">
    <property type="term" value="P:purine nucleoside catabolic process"/>
    <property type="evidence" value="ECO:0007669"/>
    <property type="project" value="TreeGrafter"/>
</dbReference>
<dbReference type="GO" id="GO:0006206">
    <property type="term" value="P:pyrimidine nucleobase metabolic process"/>
    <property type="evidence" value="ECO:0007669"/>
    <property type="project" value="UniProtKB-UniRule"/>
</dbReference>
<dbReference type="CDD" id="cd02651">
    <property type="entry name" value="nuc_hydro_IU_UC_XIUA"/>
    <property type="match status" value="1"/>
</dbReference>
<dbReference type="FunFam" id="3.90.245.10:FF:000001">
    <property type="entry name" value="Pyrimidine-specific ribonucleoside hydrolase RihA"/>
    <property type="match status" value="1"/>
</dbReference>
<dbReference type="Gene3D" id="3.90.245.10">
    <property type="entry name" value="Ribonucleoside hydrolase-like"/>
    <property type="match status" value="1"/>
</dbReference>
<dbReference type="HAMAP" id="MF_01431">
    <property type="entry name" value="Pyrim_hydro_RihA"/>
    <property type="match status" value="1"/>
</dbReference>
<dbReference type="InterPro" id="IPR015910">
    <property type="entry name" value="I/U_nuclsd_hydro_CS"/>
</dbReference>
<dbReference type="InterPro" id="IPR001910">
    <property type="entry name" value="Inosine/uridine_hydrolase_dom"/>
</dbReference>
<dbReference type="InterPro" id="IPR023186">
    <property type="entry name" value="IUNH"/>
</dbReference>
<dbReference type="InterPro" id="IPR022975">
    <property type="entry name" value="Pyrim_hydro_RihA"/>
</dbReference>
<dbReference type="InterPro" id="IPR036452">
    <property type="entry name" value="Ribo_hydro-like"/>
</dbReference>
<dbReference type="NCBIfam" id="NF007761">
    <property type="entry name" value="PRK10443.1"/>
    <property type="match status" value="1"/>
</dbReference>
<dbReference type="PANTHER" id="PTHR12304">
    <property type="entry name" value="INOSINE-URIDINE PREFERRING NUCLEOSIDE HYDROLASE"/>
    <property type="match status" value="1"/>
</dbReference>
<dbReference type="PANTHER" id="PTHR12304:SF4">
    <property type="entry name" value="URIDINE NUCLEOSIDASE"/>
    <property type="match status" value="1"/>
</dbReference>
<dbReference type="Pfam" id="PF01156">
    <property type="entry name" value="IU_nuc_hydro"/>
    <property type="match status" value="1"/>
</dbReference>
<dbReference type="SUPFAM" id="SSF53590">
    <property type="entry name" value="Nucleoside hydrolase"/>
    <property type="match status" value="1"/>
</dbReference>
<dbReference type="PROSITE" id="PS01247">
    <property type="entry name" value="IUNH"/>
    <property type="match status" value="1"/>
</dbReference>
<evidence type="ECO:0000255" key="1">
    <source>
        <dbReference type="HAMAP-Rule" id="MF_01431"/>
    </source>
</evidence>
<reference key="1">
    <citation type="journal article" date="2009" name="PLoS Genet.">
        <title>Organised genome dynamics in the Escherichia coli species results in highly diverse adaptive paths.</title>
        <authorList>
            <person name="Touchon M."/>
            <person name="Hoede C."/>
            <person name="Tenaillon O."/>
            <person name="Barbe V."/>
            <person name="Baeriswyl S."/>
            <person name="Bidet P."/>
            <person name="Bingen E."/>
            <person name="Bonacorsi S."/>
            <person name="Bouchier C."/>
            <person name="Bouvet O."/>
            <person name="Calteau A."/>
            <person name="Chiapello H."/>
            <person name="Clermont O."/>
            <person name="Cruveiller S."/>
            <person name="Danchin A."/>
            <person name="Diard M."/>
            <person name="Dossat C."/>
            <person name="Karoui M.E."/>
            <person name="Frapy E."/>
            <person name="Garry L."/>
            <person name="Ghigo J.M."/>
            <person name="Gilles A.M."/>
            <person name="Johnson J."/>
            <person name="Le Bouguenec C."/>
            <person name="Lescat M."/>
            <person name="Mangenot S."/>
            <person name="Martinez-Jehanne V."/>
            <person name="Matic I."/>
            <person name="Nassif X."/>
            <person name="Oztas S."/>
            <person name="Petit M.A."/>
            <person name="Pichon C."/>
            <person name="Rouy Z."/>
            <person name="Ruf C.S."/>
            <person name="Schneider D."/>
            <person name="Tourret J."/>
            <person name="Vacherie B."/>
            <person name="Vallenet D."/>
            <person name="Medigue C."/>
            <person name="Rocha E.P.C."/>
            <person name="Denamur E."/>
        </authorList>
    </citation>
    <scope>NUCLEOTIDE SEQUENCE [LARGE SCALE GENOMIC DNA]</scope>
    <source>
        <strain>S88 / ExPEC</strain>
    </source>
</reference>
<gene>
    <name evidence="1" type="primary">rihA</name>
    <name type="ordered locus">ECS88_0686</name>
</gene>
<sequence length="311" mass="33910">MALPILLDCDPGHDDAIAIVLALASPELDVKAITSSAGNQTPEKTLRNVLRMLTLLNRTDIPVASGAVKPLMRNLIIADNVHGESGLDGPALPEPTFAPQNCTAVELMAKTLRESEEPVTIVSTGPQTNVALLLNSHPELHSKIARIVIMGGAMGLGNWTPAAEFNIYVDPEAAEIVFQSGIPVVMAGLDVTHKAQIHVEDTERFRAIGNPVSTIVAELLDFFLEYHKDEKWGFVGAPLHDPCTIAWLLKPELFTTVERWVGVETQGKYTQGMTVVDYYYLTGNKPNATVMVDVDRQGFVDLLADRLKFYA</sequence>
<accession>B7MFR7</accession>
<comment type="function">
    <text evidence="1">Hydrolyzes with equal efficiency cytidine or uridine to ribose and cytosine or uracil, respectively.</text>
</comment>
<comment type="similarity">
    <text evidence="1">Belongs to the IUNH family. RihA subfamily.</text>
</comment>
<name>RIHA_ECO45</name>
<keyword id="KW-0326">Glycosidase</keyword>
<keyword id="KW-0378">Hydrolase</keyword>
<keyword id="KW-1185">Reference proteome</keyword>
<feature type="chain" id="PRO_1000145789" description="Pyrimidine-specific ribonucleoside hydrolase RihA">
    <location>
        <begin position="1"/>
        <end position="311"/>
    </location>
</feature>
<feature type="active site" evidence="1">
    <location>
        <position position="240"/>
    </location>
</feature>
<organism>
    <name type="scientific">Escherichia coli O45:K1 (strain S88 / ExPEC)</name>
    <dbReference type="NCBI Taxonomy" id="585035"/>
    <lineage>
        <taxon>Bacteria</taxon>
        <taxon>Pseudomonadati</taxon>
        <taxon>Pseudomonadota</taxon>
        <taxon>Gammaproteobacteria</taxon>
        <taxon>Enterobacterales</taxon>
        <taxon>Enterobacteriaceae</taxon>
        <taxon>Escherichia</taxon>
    </lineage>
</organism>
<proteinExistence type="inferred from homology"/>